<name>FABZ_SHESH</name>
<proteinExistence type="inferred from homology"/>
<keyword id="KW-0963">Cytoplasm</keyword>
<keyword id="KW-0441">Lipid A biosynthesis</keyword>
<keyword id="KW-0444">Lipid biosynthesis</keyword>
<keyword id="KW-0443">Lipid metabolism</keyword>
<keyword id="KW-0456">Lyase</keyword>
<keyword id="KW-1185">Reference proteome</keyword>
<gene>
    <name evidence="1" type="primary">fabZ</name>
    <name type="ordered locus">Ssed_3150</name>
</gene>
<organism>
    <name type="scientific">Shewanella sediminis (strain HAW-EB3)</name>
    <dbReference type="NCBI Taxonomy" id="425104"/>
    <lineage>
        <taxon>Bacteria</taxon>
        <taxon>Pseudomonadati</taxon>
        <taxon>Pseudomonadota</taxon>
        <taxon>Gammaproteobacteria</taxon>
        <taxon>Alteromonadales</taxon>
        <taxon>Shewanellaceae</taxon>
        <taxon>Shewanella</taxon>
    </lineage>
</organism>
<dbReference type="EC" id="4.2.1.59" evidence="1"/>
<dbReference type="EMBL" id="CP000821">
    <property type="protein sequence ID" value="ABV37754.1"/>
    <property type="molecule type" value="Genomic_DNA"/>
</dbReference>
<dbReference type="RefSeq" id="WP_012143484.1">
    <property type="nucleotide sequence ID" value="NC_009831.1"/>
</dbReference>
<dbReference type="SMR" id="A8FY31"/>
<dbReference type="STRING" id="425104.Ssed_3150"/>
<dbReference type="KEGG" id="sse:Ssed_3150"/>
<dbReference type="eggNOG" id="COG0764">
    <property type="taxonomic scope" value="Bacteria"/>
</dbReference>
<dbReference type="HOGENOM" id="CLU_078912_1_0_6"/>
<dbReference type="OrthoDB" id="9772788at2"/>
<dbReference type="Proteomes" id="UP000002015">
    <property type="component" value="Chromosome"/>
</dbReference>
<dbReference type="GO" id="GO:0005737">
    <property type="term" value="C:cytoplasm"/>
    <property type="evidence" value="ECO:0007669"/>
    <property type="project" value="UniProtKB-SubCell"/>
</dbReference>
<dbReference type="GO" id="GO:0016020">
    <property type="term" value="C:membrane"/>
    <property type="evidence" value="ECO:0007669"/>
    <property type="project" value="GOC"/>
</dbReference>
<dbReference type="GO" id="GO:0019171">
    <property type="term" value="F:(3R)-hydroxyacyl-[acyl-carrier-protein] dehydratase activity"/>
    <property type="evidence" value="ECO:0007669"/>
    <property type="project" value="UniProtKB-EC"/>
</dbReference>
<dbReference type="GO" id="GO:0006633">
    <property type="term" value="P:fatty acid biosynthetic process"/>
    <property type="evidence" value="ECO:0007669"/>
    <property type="project" value="UniProtKB-UniRule"/>
</dbReference>
<dbReference type="GO" id="GO:0009245">
    <property type="term" value="P:lipid A biosynthetic process"/>
    <property type="evidence" value="ECO:0007669"/>
    <property type="project" value="UniProtKB-UniRule"/>
</dbReference>
<dbReference type="CDD" id="cd01288">
    <property type="entry name" value="FabZ"/>
    <property type="match status" value="1"/>
</dbReference>
<dbReference type="FunFam" id="3.10.129.10:FF:000001">
    <property type="entry name" value="3-hydroxyacyl-[acyl-carrier-protein] dehydratase FabZ"/>
    <property type="match status" value="1"/>
</dbReference>
<dbReference type="Gene3D" id="3.10.129.10">
    <property type="entry name" value="Hotdog Thioesterase"/>
    <property type="match status" value="1"/>
</dbReference>
<dbReference type="HAMAP" id="MF_00406">
    <property type="entry name" value="FabZ"/>
    <property type="match status" value="1"/>
</dbReference>
<dbReference type="InterPro" id="IPR013114">
    <property type="entry name" value="FabA_FabZ"/>
</dbReference>
<dbReference type="InterPro" id="IPR010084">
    <property type="entry name" value="FabZ"/>
</dbReference>
<dbReference type="InterPro" id="IPR029069">
    <property type="entry name" value="HotDog_dom_sf"/>
</dbReference>
<dbReference type="NCBIfam" id="TIGR01750">
    <property type="entry name" value="fabZ"/>
    <property type="match status" value="1"/>
</dbReference>
<dbReference type="NCBIfam" id="NF000582">
    <property type="entry name" value="PRK00006.1"/>
    <property type="match status" value="1"/>
</dbReference>
<dbReference type="PANTHER" id="PTHR30272">
    <property type="entry name" value="3-HYDROXYACYL-[ACYL-CARRIER-PROTEIN] DEHYDRATASE"/>
    <property type="match status" value="1"/>
</dbReference>
<dbReference type="PANTHER" id="PTHR30272:SF1">
    <property type="entry name" value="3-HYDROXYACYL-[ACYL-CARRIER-PROTEIN] DEHYDRATASE"/>
    <property type="match status" value="1"/>
</dbReference>
<dbReference type="Pfam" id="PF07977">
    <property type="entry name" value="FabA"/>
    <property type="match status" value="1"/>
</dbReference>
<dbReference type="SUPFAM" id="SSF54637">
    <property type="entry name" value="Thioesterase/thiol ester dehydrase-isomerase"/>
    <property type="match status" value="1"/>
</dbReference>
<protein>
    <recommendedName>
        <fullName evidence="1">3-hydroxyacyl-[acyl-carrier-protein] dehydratase FabZ</fullName>
        <ecNumber evidence="1">4.2.1.59</ecNumber>
    </recommendedName>
    <alternativeName>
        <fullName evidence="1">(3R)-hydroxymyristoyl-[acyl-carrier-protein] dehydratase</fullName>
        <shortName evidence="1">(3R)-hydroxymyristoyl-ACP dehydrase</shortName>
    </alternativeName>
    <alternativeName>
        <fullName evidence="1">Beta-hydroxyacyl-ACP dehydratase</fullName>
    </alternativeName>
</protein>
<sequence>MSNQLNTMDIKEIMNSLPHRYPFLLIDRVLDYTPGETLHAIKNVTINEPFFQGHFPIQPVMPGVLILEAMAQATGLLAYKTMEAAVTDDSLYYFAGIDKARFKRVVEPGDQLHFEVKMVKERRGIGVFTGVVKVDGELVCSAEIMCARREIKK</sequence>
<evidence type="ECO:0000255" key="1">
    <source>
        <dbReference type="HAMAP-Rule" id="MF_00406"/>
    </source>
</evidence>
<comment type="function">
    <text evidence="1">Involved in unsaturated fatty acids biosynthesis. Catalyzes the dehydration of short chain beta-hydroxyacyl-ACPs and long chain saturated and unsaturated beta-hydroxyacyl-ACPs.</text>
</comment>
<comment type="catalytic activity">
    <reaction evidence="1">
        <text>a (3R)-hydroxyacyl-[ACP] = a (2E)-enoyl-[ACP] + H2O</text>
        <dbReference type="Rhea" id="RHEA:13097"/>
        <dbReference type="Rhea" id="RHEA-COMP:9925"/>
        <dbReference type="Rhea" id="RHEA-COMP:9945"/>
        <dbReference type="ChEBI" id="CHEBI:15377"/>
        <dbReference type="ChEBI" id="CHEBI:78784"/>
        <dbReference type="ChEBI" id="CHEBI:78827"/>
        <dbReference type="EC" id="4.2.1.59"/>
    </reaction>
</comment>
<comment type="subcellular location">
    <subcellularLocation>
        <location evidence="1">Cytoplasm</location>
    </subcellularLocation>
</comment>
<comment type="similarity">
    <text evidence="1">Belongs to the thioester dehydratase family. FabZ subfamily.</text>
</comment>
<accession>A8FY31</accession>
<reference key="1">
    <citation type="submission" date="2007-08" db="EMBL/GenBank/DDBJ databases">
        <title>Complete sequence of Shewanella sediminis HAW-EB3.</title>
        <authorList>
            <consortium name="US DOE Joint Genome Institute"/>
            <person name="Copeland A."/>
            <person name="Lucas S."/>
            <person name="Lapidus A."/>
            <person name="Barry K."/>
            <person name="Glavina del Rio T."/>
            <person name="Dalin E."/>
            <person name="Tice H."/>
            <person name="Pitluck S."/>
            <person name="Chertkov O."/>
            <person name="Brettin T."/>
            <person name="Bruce D."/>
            <person name="Detter J.C."/>
            <person name="Han C."/>
            <person name="Schmutz J."/>
            <person name="Larimer F."/>
            <person name="Land M."/>
            <person name="Hauser L."/>
            <person name="Kyrpides N."/>
            <person name="Kim E."/>
            <person name="Zhao J.-S."/>
            <person name="Richardson P."/>
        </authorList>
    </citation>
    <scope>NUCLEOTIDE SEQUENCE [LARGE SCALE GENOMIC DNA]</scope>
    <source>
        <strain>HAW-EB3</strain>
    </source>
</reference>
<feature type="chain" id="PRO_1000080451" description="3-hydroxyacyl-[acyl-carrier-protein] dehydratase FabZ">
    <location>
        <begin position="1"/>
        <end position="153"/>
    </location>
</feature>
<feature type="active site" evidence="1">
    <location>
        <position position="54"/>
    </location>
</feature>